<dbReference type="EMBL" id="CU329671">
    <property type="protein sequence ID" value="CAB40163.1"/>
    <property type="molecule type" value="Genomic_DNA"/>
</dbReference>
<dbReference type="PIR" id="T39909">
    <property type="entry name" value="T39909"/>
</dbReference>
<dbReference type="RefSeq" id="NP_595355.1">
    <property type="nucleotide sequence ID" value="NM_001021262.2"/>
</dbReference>
<dbReference type="SMR" id="Q9Y7K0"/>
<dbReference type="BioGRID" id="277139">
    <property type="interactions" value="3"/>
</dbReference>
<dbReference type="FunCoup" id="Q9Y7K0">
    <property type="interactions" value="13"/>
</dbReference>
<dbReference type="STRING" id="284812.Q9Y7K0"/>
<dbReference type="iPTMnet" id="Q9Y7K0"/>
<dbReference type="PaxDb" id="4896-SPBC216.03.1"/>
<dbReference type="EnsemblFungi" id="SPBC216.03.1">
    <property type="protein sequence ID" value="SPBC216.03.1:pep"/>
    <property type="gene ID" value="SPBC216.03"/>
</dbReference>
<dbReference type="KEGG" id="spo:2540613"/>
<dbReference type="PomBase" id="SPBC216.03"/>
<dbReference type="VEuPathDB" id="FungiDB:SPBC216.03"/>
<dbReference type="eggNOG" id="KOG1203">
    <property type="taxonomic scope" value="Eukaryota"/>
</dbReference>
<dbReference type="HOGENOM" id="CLU_025711_1_2_1"/>
<dbReference type="InParanoid" id="Q9Y7K0"/>
<dbReference type="OMA" id="KQARGMT"/>
<dbReference type="PhylomeDB" id="Q9Y7K0"/>
<dbReference type="PRO" id="PR:Q9Y7K0"/>
<dbReference type="Proteomes" id="UP000002485">
    <property type="component" value="Chromosome II"/>
</dbReference>
<dbReference type="GO" id="GO:0005829">
    <property type="term" value="C:cytosol"/>
    <property type="evidence" value="ECO:0007005"/>
    <property type="project" value="PomBase"/>
</dbReference>
<dbReference type="GO" id="GO:0005634">
    <property type="term" value="C:nucleus"/>
    <property type="evidence" value="ECO:0007005"/>
    <property type="project" value="PomBase"/>
</dbReference>
<dbReference type="GO" id="GO:0042167">
    <property type="term" value="P:heme catabolic process"/>
    <property type="evidence" value="ECO:0000266"/>
    <property type="project" value="PomBase"/>
</dbReference>
<dbReference type="CDD" id="cd05243">
    <property type="entry name" value="SDR_a5"/>
    <property type="match status" value="1"/>
</dbReference>
<dbReference type="Gene3D" id="3.40.50.720">
    <property type="entry name" value="NAD(P)-binding Rossmann-like Domain"/>
    <property type="match status" value="1"/>
</dbReference>
<dbReference type="InterPro" id="IPR016040">
    <property type="entry name" value="NAD(P)-bd_dom"/>
</dbReference>
<dbReference type="InterPro" id="IPR036291">
    <property type="entry name" value="NAD(P)-bd_dom_sf"/>
</dbReference>
<dbReference type="PANTHER" id="PTHR15020">
    <property type="entry name" value="FLAVIN REDUCTASE-RELATED"/>
    <property type="match status" value="1"/>
</dbReference>
<dbReference type="PANTHER" id="PTHR15020:SF50">
    <property type="entry name" value="UPF0659 PROTEIN YMR090W"/>
    <property type="match status" value="1"/>
</dbReference>
<dbReference type="Pfam" id="PF13460">
    <property type="entry name" value="NAD_binding_10"/>
    <property type="match status" value="1"/>
</dbReference>
<dbReference type="SUPFAM" id="SSF51735">
    <property type="entry name" value="NAD(P)-binding Rossmann-fold domains"/>
    <property type="match status" value="1"/>
</dbReference>
<feature type="chain" id="PRO_0000351426" description="UPF0659 protein C216.03">
    <location>
        <begin position="1"/>
        <end position="247"/>
    </location>
</feature>
<proteinExistence type="inferred from homology"/>
<accession>Q9Y7K0</accession>
<keyword id="KW-0963">Cytoplasm</keyword>
<keyword id="KW-0539">Nucleus</keyword>
<keyword id="KW-1185">Reference proteome</keyword>
<organism>
    <name type="scientific">Schizosaccharomyces pombe (strain 972 / ATCC 24843)</name>
    <name type="common">Fission yeast</name>
    <dbReference type="NCBI Taxonomy" id="284812"/>
    <lineage>
        <taxon>Eukaryota</taxon>
        <taxon>Fungi</taxon>
        <taxon>Dikarya</taxon>
        <taxon>Ascomycota</taxon>
        <taxon>Taphrinomycotina</taxon>
        <taxon>Schizosaccharomycetes</taxon>
        <taxon>Schizosaccharomycetales</taxon>
        <taxon>Schizosaccharomycetaceae</taxon>
        <taxon>Schizosaccharomyces</taxon>
    </lineage>
</organism>
<evidence type="ECO:0000269" key="1">
    <source>
    </source>
</evidence>
<evidence type="ECO:0000305" key="2"/>
<comment type="subcellular location">
    <subcellularLocation>
        <location evidence="1">Cytoplasm</location>
    </subcellularLocation>
    <subcellularLocation>
        <location evidence="1">Nucleus</location>
    </subcellularLocation>
</comment>
<comment type="similarity">
    <text evidence="2">Belongs to the UPF0659 family.</text>
</comment>
<gene>
    <name type="ORF">SPBC216.03</name>
</gene>
<sequence>MTVFVVFGGHGKVALLFTKIATEAGHIVYNVVRDYVQNEDIEKVHGRTSVCSLEKATPNDIAQFLAEIHPDVVIFAAGAGGKGGPERTRAVDYEGAIKVYDAMRIAGIRRLIMISAIDNRDMSQPPPPYYTAADIELSEKIHQSIGTYYHYKYLADQELVRRSSDIDWTILRPSGMTDEKGSGKVALGKISINCMMSRENVARTVLLFALDNQSIHLVVDMTDGNVPIYKAIAGFVVKGESSYTYSV</sequence>
<protein>
    <recommendedName>
        <fullName>UPF0659 protein C216.03</fullName>
    </recommendedName>
</protein>
<name>YGL3_SCHPO</name>
<reference key="1">
    <citation type="journal article" date="2002" name="Nature">
        <title>The genome sequence of Schizosaccharomyces pombe.</title>
        <authorList>
            <person name="Wood V."/>
            <person name="Gwilliam R."/>
            <person name="Rajandream M.A."/>
            <person name="Lyne M.H."/>
            <person name="Lyne R."/>
            <person name="Stewart A."/>
            <person name="Sgouros J.G."/>
            <person name="Peat N."/>
            <person name="Hayles J."/>
            <person name="Baker S.G."/>
            <person name="Basham D."/>
            <person name="Bowman S."/>
            <person name="Brooks K."/>
            <person name="Brown D."/>
            <person name="Brown S."/>
            <person name="Chillingworth T."/>
            <person name="Churcher C.M."/>
            <person name="Collins M."/>
            <person name="Connor R."/>
            <person name="Cronin A."/>
            <person name="Davis P."/>
            <person name="Feltwell T."/>
            <person name="Fraser A."/>
            <person name="Gentles S."/>
            <person name="Goble A."/>
            <person name="Hamlin N."/>
            <person name="Harris D.E."/>
            <person name="Hidalgo J."/>
            <person name="Hodgson G."/>
            <person name="Holroyd S."/>
            <person name="Hornsby T."/>
            <person name="Howarth S."/>
            <person name="Huckle E.J."/>
            <person name="Hunt S."/>
            <person name="Jagels K."/>
            <person name="James K.D."/>
            <person name="Jones L."/>
            <person name="Jones M."/>
            <person name="Leather S."/>
            <person name="McDonald S."/>
            <person name="McLean J."/>
            <person name="Mooney P."/>
            <person name="Moule S."/>
            <person name="Mungall K.L."/>
            <person name="Murphy L.D."/>
            <person name="Niblett D."/>
            <person name="Odell C."/>
            <person name="Oliver K."/>
            <person name="O'Neil S."/>
            <person name="Pearson D."/>
            <person name="Quail M.A."/>
            <person name="Rabbinowitsch E."/>
            <person name="Rutherford K.M."/>
            <person name="Rutter S."/>
            <person name="Saunders D."/>
            <person name="Seeger K."/>
            <person name="Sharp S."/>
            <person name="Skelton J."/>
            <person name="Simmonds M.N."/>
            <person name="Squares R."/>
            <person name="Squares S."/>
            <person name="Stevens K."/>
            <person name="Taylor K."/>
            <person name="Taylor R.G."/>
            <person name="Tivey A."/>
            <person name="Walsh S.V."/>
            <person name="Warren T."/>
            <person name="Whitehead S."/>
            <person name="Woodward J.R."/>
            <person name="Volckaert G."/>
            <person name="Aert R."/>
            <person name="Robben J."/>
            <person name="Grymonprez B."/>
            <person name="Weltjens I."/>
            <person name="Vanstreels E."/>
            <person name="Rieger M."/>
            <person name="Schaefer M."/>
            <person name="Mueller-Auer S."/>
            <person name="Gabel C."/>
            <person name="Fuchs M."/>
            <person name="Duesterhoeft A."/>
            <person name="Fritzc C."/>
            <person name="Holzer E."/>
            <person name="Moestl D."/>
            <person name="Hilbert H."/>
            <person name="Borzym K."/>
            <person name="Langer I."/>
            <person name="Beck A."/>
            <person name="Lehrach H."/>
            <person name="Reinhardt R."/>
            <person name="Pohl T.M."/>
            <person name="Eger P."/>
            <person name="Zimmermann W."/>
            <person name="Wedler H."/>
            <person name="Wambutt R."/>
            <person name="Purnelle B."/>
            <person name="Goffeau A."/>
            <person name="Cadieu E."/>
            <person name="Dreano S."/>
            <person name="Gloux S."/>
            <person name="Lelaure V."/>
            <person name="Mottier S."/>
            <person name="Galibert F."/>
            <person name="Aves S.J."/>
            <person name="Xiang Z."/>
            <person name="Hunt C."/>
            <person name="Moore K."/>
            <person name="Hurst S.M."/>
            <person name="Lucas M."/>
            <person name="Rochet M."/>
            <person name="Gaillardin C."/>
            <person name="Tallada V.A."/>
            <person name="Garzon A."/>
            <person name="Thode G."/>
            <person name="Daga R.R."/>
            <person name="Cruzado L."/>
            <person name="Jimenez J."/>
            <person name="Sanchez M."/>
            <person name="del Rey F."/>
            <person name="Benito J."/>
            <person name="Dominguez A."/>
            <person name="Revuelta J.L."/>
            <person name="Moreno S."/>
            <person name="Armstrong J."/>
            <person name="Forsburg S.L."/>
            <person name="Cerutti L."/>
            <person name="Lowe T."/>
            <person name="McCombie W.R."/>
            <person name="Paulsen I."/>
            <person name="Potashkin J."/>
            <person name="Shpakovski G.V."/>
            <person name="Ussery D."/>
            <person name="Barrell B.G."/>
            <person name="Nurse P."/>
        </authorList>
    </citation>
    <scope>NUCLEOTIDE SEQUENCE [LARGE SCALE GENOMIC DNA]</scope>
    <source>
        <strain>972 / ATCC 24843</strain>
    </source>
</reference>
<reference key="2">
    <citation type="journal article" date="2006" name="Nat. Biotechnol.">
        <title>ORFeome cloning and global analysis of protein localization in the fission yeast Schizosaccharomyces pombe.</title>
        <authorList>
            <person name="Matsuyama A."/>
            <person name="Arai R."/>
            <person name="Yashiroda Y."/>
            <person name="Shirai A."/>
            <person name="Kamata A."/>
            <person name="Sekido S."/>
            <person name="Kobayashi Y."/>
            <person name="Hashimoto A."/>
            <person name="Hamamoto M."/>
            <person name="Hiraoka Y."/>
            <person name="Horinouchi S."/>
            <person name="Yoshida M."/>
        </authorList>
    </citation>
    <scope>SUBCELLULAR LOCATION [LARGE SCALE ANALYSIS]</scope>
</reference>